<keyword id="KW-1185">Reference proteome</keyword>
<keyword id="KW-0687">Ribonucleoprotein</keyword>
<keyword id="KW-0689">Ribosomal protein</keyword>
<keyword id="KW-0694">RNA-binding</keyword>
<keyword id="KW-0699">rRNA-binding</keyword>
<keyword id="KW-0820">tRNA-binding</keyword>
<organism>
    <name type="scientific">Buchnera aphidicola subsp. Acyrthosiphon pisum (strain APS)</name>
    <name type="common">Acyrthosiphon pisum symbiotic bacterium</name>
    <dbReference type="NCBI Taxonomy" id="107806"/>
    <lineage>
        <taxon>Bacteria</taxon>
        <taxon>Pseudomonadati</taxon>
        <taxon>Pseudomonadota</taxon>
        <taxon>Gammaproteobacteria</taxon>
        <taxon>Enterobacterales</taxon>
        <taxon>Erwiniaceae</taxon>
        <taxon>Buchnera</taxon>
    </lineage>
</organism>
<comment type="function">
    <text evidence="1">This is one of the proteins that bind and probably mediate the attachment of the 5S RNA into the large ribosomal subunit, where it forms part of the central protuberance. In the 70S ribosome it contacts protein S13 of the 30S subunit (bridge B1b), connecting the 2 subunits; this bridge is implicated in subunit movement. Contacts the P site tRNA; the 5S rRNA and some of its associated proteins might help stabilize positioning of ribosome-bound tRNAs.</text>
</comment>
<comment type="subunit">
    <text evidence="1">Part of the 50S ribosomal subunit; part of the 5S rRNA/L5/L18/L25 subcomplex. Contacts the 5S rRNA and the P site tRNA. Forms a bridge to the 30S subunit in the 70S ribosome.</text>
</comment>
<comment type="similarity">
    <text evidence="1">Belongs to the universal ribosomal protein uL5 family.</text>
</comment>
<feature type="chain" id="PRO_0000124903" description="Large ribosomal subunit protein uL5">
    <location>
        <begin position="1"/>
        <end position="179"/>
    </location>
</feature>
<sequence>MATLYDYYKSKVITQLMHELNYSSVMQVPKIDKITLNMGVGGAASDKKILDNAILDLTAISGQKPLITKARKSVAGFKIRQGYPIGCKVTLRGQKKWHFFERLIIIAVPRIRDFRGLSSHSFDGQGNYSLGIREQIIFPEIDYDKIDRVRGLDITITTTAKSNHEARLLLSAFNFPFRK</sequence>
<dbReference type="EMBL" id="BA000003">
    <property type="protein sequence ID" value="BAB13205.1"/>
    <property type="molecule type" value="Genomic_DNA"/>
</dbReference>
<dbReference type="RefSeq" id="NP_240319.1">
    <property type="nucleotide sequence ID" value="NC_002528.1"/>
</dbReference>
<dbReference type="RefSeq" id="WP_009874463.1">
    <property type="nucleotide sequence ID" value="NZ_AP036055.1"/>
</dbReference>
<dbReference type="SMR" id="P57579"/>
<dbReference type="STRING" id="563178.BUAP5A_505"/>
<dbReference type="EnsemblBacteria" id="BAB13205">
    <property type="protein sequence ID" value="BAB13205"/>
    <property type="gene ID" value="BAB13205"/>
</dbReference>
<dbReference type="KEGG" id="buc:BU512"/>
<dbReference type="PATRIC" id="fig|107806.10.peg.517"/>
<dbReference type="eggNOG" id="COG0094">
    <property type="taxonomic scope" value="Bacteria"/>
</dbReference>
<dbReference type="HOGENOM" id="CLU_061015_2_1_6"/>
<dbReference type="Proteomes" id="UP000001806">
    <property type="component" value="Chromosome"/>
</dbReference>
<dbReference type="GO" id="GO:1990904">
    <property type="term" value="C:ribonucleoprotein complex"/>
    <property type="evidence" value="ECO:0007669"/>
    <property type="project" value="UniProtKB-KW"/>
</dbReference>
<dbReference type="GO" id="GO:0005840">
    <property type="term" value="C:ribosome"/>
    <property type="evidence" value="ECO:0007669"/>
    <property type="project" value="UniProtKB-KW"/>
</dbReference>
<dbReference type="GO" id="GO:0019843">
    <property type="term" value="F:rRNA binding"/>
    <property type="evidence" value="ECO:0007669"/>
    <property type="project" value="UniProtKB-UniRule"/>
</dbReference>
<dbReference type="GO" id="GO:0003735">
    <property type="term" value="F:structural constituent of ribosome"/>
    <property type="evidence" value="ECO:0007669"/>
    <property type="project" value="InterPro"/>
</dbReference>
<dbReference type="GO" id="GO:0000049">
    <property type="term" value="F:tRNA binding"/>
    <property type="evidence" value="ECO:0007669"/>
    <property type="project" value="UniProtKB-UniRule"/>
</dbReference>
<dbReference type="GO" id="GO:0006412">
    <property type="term" value="P:translation"/>
    <property type="evidence" value="ECO:0007669"/>
    <property type="project" value="UniProtKB-UniRule"/>
</dbReference>
<dbReference type="FunFam" id="3.30.1440.10:FF:000001">
    <property type="entry name" value="50S ribosomal protein L5"/>
    <property type="match status" value="1"/>
</dbReference>
<dbReference type="Gene3D" id="3.30.1440.10">
    <property type="match status" value="1"/>
</dbReference>
<dbReference type="HAMAP" id="MF_01333_B">
    <property type="entry name" value="Ribosomal_uL5_B"/>
    <property type="match status" value="1"/>
</dbReference>
<dbReference type="InterPro" id="IPR002132">
    <property type="entry name" value="Ribosomal_uL5"/>
</dbReference>
<dbReference type="InterPro" id="IPR020930">
    <property type="entry name" value="Ribosomal_uL5_bac-type"/>
</dbReference>
<dbReference type="InterPro" id="IPR031309">
    <property type="entry name" value="Ribosomal_uL5_C"/>
</dbReference>
<dbReference type="InterPro" id="IPR020929">
    <property type="entry name" value="Ribosomal_uL5_CS"/>
</dbReference>
<dbReference type="InterPro" id="IPR022803">
    <property type="entry name" value="Ribosomal_uL5_dom_sf"/>
</dbReference>
<dbReference type="InterPro" id="IPR031310">
    <property type="entry name" value="Ribosomal_uL5_N"/>
</dbReference>
<dbReference type="NCBIfam" id="NF000585">
    <property type="entry name" value="PRK00010.1"/>
    <property type="match status" value="1"/>
</dbReference>
<dbReference type="PANTHER" id="PTHR11994">
    <property type="entry name" value="60S RIBOSOMAL PROTEIN L11-RELATED"/>
    <property type="match status" value="1"/>
</dbReference>
<dbReference type="Pfam" id="PF00281">
    <property type="entry name" value="Ribosomal_L5"/>
    <property type="match status" value="1"/>
</dbReference>
<dbReference type="Pfam" id="PF00673">
    <property type="entry name" value="Ribosomal_L5_C"/>
    <property type="match status" value="1"/>
</dbReference>
<dbReference type="PIRSF" id="PIRSF002161">
    <property type="entry name" value="Ribosomal_L5"/>
    <property type="match status" value="1"/>
</dbReference>
<dbReference type="SUPFAM" id="SSF55282">
    <property type="entry name" value="RL5-like"/>
    <property type="match status" value="1"/>
</dbReference>
<dbReference type="PROSITE" id="PS00358">
    <property type="entry name" value="RIBOSOMAL_L5"/>
    <property type="match status" value="1"/>
</dbReference>
<proteinExistence type="inferred from homology"/>
<accession>P57579</accession>
<name>RL5_BUCAI</name>
<evidence type="ECO:0000255" key="1">
    <source>
        <dbReference type="HAMAP-Rule" id="MF_01333"/>
    </source>
</evidence>
<evidence type="ECO:0000305" key="2"/>
<reference key="1">
    <citation type="journal article" date="2000" name="Nature">
        <title>Genome sequence of the endocellular bacterial symbiont of aphids Buchnera sp. APS.</title>
        <authorList>
            <person name="Shigenobu S."/>
            <person name="Watanabe H."/>
            <person name="Hattori M."/>
            <person name="Sakaki Y."/>
            <person name="Ishikawa H."/>
        </authorList>
    </citation>
    <scope>NUCLEOTIDE SEQUENCE [LARGE SCALE GENOMIC DNA]</scope>
    <source>
        <strain>APS</strain>
    </source>
</reference>
<protein>
    <recommendedName>
        <fullName evidence="1">Large ribosomal subunit protein uL5</fullName>
    </recommendedName>
    <alternativeName>
        <fullName evidence="2">50S ribosomal protein L5</fullName>
    </alternativeName>
</protein>
<gene>
    <name evidence="1" type="primary">rplE</name>
    <name type="ordered locus">BU512</name>
</gene>